<protein>
    <recommendedName>
        <fullName evidence="1">Bifunctional uridylyltransferase/uridylyl-removing enzyme</fullName>
        <shortName evidence="1">UTase/UR</shortName>
    </recommendedName>
    <alternativeName>
        <fullName evidence="1">Bifunctional [protein-PII] modification enzyme</fullName>
    </alternativeName>
    <alternativeName>
        <fullName evidence="1">Bifunctional nitrogen sensor protein</fullName>
    </alternativeName>
    <domain>
        <recommendedName>
            <fullName evidence="1">[Protein-PII] uridylyltransferase</fullName>
            <shortName evidence="1">PII uridylyltransferase</shortName>
            <shortName evidence="1">UTase</shortName>
            <ecNumber evidence="1">2.7.7.59</ecNumber>
        </recommendedName>
    </domain>
    <domain>
        <recommendedName>
            <fullName evidence="1">[Protein-PII]-UMP uridylyl-removing enzyme</fullName>
            <shortName evidence="1">UR</shortName>
            <ecNumber evidence="1">3.1.4.-</ecNumber>
        </recommendedName>
    </domain>
</protein>
<reference key="1">
    <citation type="submission" date="1999-05" db="EMBL/GenBank/DDBJ databases">
        <title>Unexpected effects of a transposon insertion in the Vibrio fischeri glnD gene: defects in iron uptake and symbiotic persistence in addition to nitrogen utilization.</title>
        <authorList>
            <person name="Graf J."/>
            <person name="Ruby E.G."/>
        </authorList>
    </citation>
    <scope>NUCLEOTIDE SEQUENCE [GENOMIC DNA]</scope>
</reference>
<reference key="2">
    <citation type="journal article" date="2005" name="Proc. Natl. Acad. Sci. U.S.A.">
        <title>Complete genome sequence of Vibrio fischeri: a symbiotic bacterium with pathogenic congeners.</title>
        <authorList>
            <person name="Ruby E.G."/>
            <person name="Urbanowski M."/>
            <person name="Campbell J."/>
            <person name="Dunn A."/>
            <person name="Faini M."/>
            <person name="Gunsalus R."/>
            <person name="Lostroh P."/>
            <person name="Lupp C."/>
            <person name="McCann J."/>
            <person name="Millikan D."/>
            <person name="Schaefer A."/>
            <person name="Stabb E."/>
            <person name="Stevens A."/>
            <person name="Visick K."/>
            <person name="Whistler C."/>
            <person name="Greenberg E.P."/>
        </authorList>
    </citation>
    <scope>NUCLEOTIDE SEQUENCE [LARGE SCALE GENOMIC DNA]</scope>
    <source>
        <strain>ATCC 700601 / ES114</strain>
    </source>
</reference>
<sequence length="873" mass="100599">MKYLSPLSLSDTQLNITELKQQLTLFSQYQINAFHQHKAVSDLVLERSHYFDQLLSRLWQFFKFDDIANTSLIAVGGYGRSELHPLSDIDILILTENNTNDAFCQKVGELVTLLWDLKLEVGHSVRSIAECIEIGQNDLTVATNLQEARYISGNKELSHQLKLKIHSDSFWPSELFYQAKIDEQKKRHSRYHDTTYNLEPDIKSSPGGLRDIHTLSWIARRHFGATSLLEMSQAGFLTDAEYRELLECQEFLWRVRFALHIELKRYDNRLTFGHQASVAEHLGFIGEGNRGVERMMKEFYRTLRRVAELNSMLLKIFDQAILHQGEQDDAIIIDDDFQRRGRLIEARKPALFQARPDTILDMFLLMANDSTIDGVAPPTMRQLRTARRRLNRFLCEIPEAKEKFLQLTQHPNALNNAFSSMHKLGVLSAYLPQWSHIVGQMQFDLFHAYTVDEHSIRLLKHINKFSDTTNRDKHPICCEIFPKIMKKELLIIAAIFHDIAKGRGGDHSELGAVDAYDFCISHGLSKPEANLVSWLVKSHLLMSVTAQRRDIYDPDVITEFAKQVRDEERLDYLVCLTVADICATNPDLWNSWKRSLIADLYNATQRALRRGLENPPDLRDRIRHNQQMASAQLRSEGFTQWEVDALWRRFKADYFLRHTHKQIAWHASHLLRHQDKEKSLILISKNASRGGTEIFVYSKDQPHLFATVAAELDRRSITIYDAQVMSSKDGYALDTFMVLDQNDDPIDEERQQRLIDQLYDVKLNDQATHIKTRRPPRQLQHFNVKTRMEFLPTKTGKRTLMEFVALDTPGLLATVGATFAQLGINLHAAKITTIGERAEDLFILTSDVGGRLDDEKQAELELALVKNVARLSS</sequence>
<proteinExistence type="inferred from homology"/>
<name>GLND_ALIF1</name>
<feature type="chain" id="PRO_0000192772" description="Bifunctional uridylyltransferase/uridylyl-removing enzyme">
    <location>
        <begin position="1"/>
        <end position="873"/>
    </location>
</feature>
<feature type="domain" description="HD" evidence="2">
    <location>
        <begin position="451"/>
        <end position="573"/>
    </location>
</feature>
<feature type="domain" description="ACT 1" evidence="1">
    <location>
        <begin position="693"/>
        <end position="777"/>
    </location>
</feature>
<feature type="domain" description="ACT 2" evidence="1">
    <location>
        <begin position="800"/>
        <end position="873"/>
    </location>
</feature>
<feature type="region of interest" description="Uridylyltransferase">
    <location>
        <begin position="1"/>
        <end position="332"/>
    </location>
</feature>
<feature type="region of interest" description="Uridylyl-removing">
    <location>
        <begin position="333"/>
        <end position="692"/>
    </location>
</feature>
<dbReference type="EC" id="2.7.7.59" evidence="1"/>
<dbReference type="EC" id="3.1.4.-" evidence="1"/>
<dbReference type="EMBL" id="AF152563">
    <property type="protein sequence ID" value="AAD38384.1"/>
    <property type="molecule type" value="Genomic_DNA"/>
</dbReference>
<dbReference type="EMBL" id="CP000020">
    <property type="protein sequence ID" value="AAW86459.1"/>
    <property type="molecule type" value="Genomic_DNA"/>
</dbReference>
<dbReference type="RefSeq" id="WP_011262435.1">
    <property type="nucleotide sequence ID" value="NC_006840.2"/>
</dbReference>
<dbReference type="RefSeq" id="YP_205347.1">
    <property type="nucleotide sequence ID" value="NC_006840.2"/>
</dbReference>
<dbReference type="STRING" id="312309.VF_1964"/>
<dbReference type="EnsemblBacteria" id="AAW86459">
    <property type="protein sequence ID" value="AAW86459"/>
    <property type="gene ID" value="VF_1964"/>
</dbReference>
<dbReference type="GeneID" id="54164660"/>
<dbReference type="KEGG" id="vfi:VF_1964"/>
<dbReference type="PATRIC" id="fig|312309.11.peg.1991"/>
<dbReference type="eggNOG" id="COG2844">
    <property type="taxonomic scope" value="Bacteria"/>
</dbReference>
<dbReference type="HOGENOM" id="CLU_012833_0_0_6"/>
<dbReference type="OrthoDB" id="9758038at2"/>
<dbReference type="Proteomes" id="UP000000537">
    <property type="component" value="Chromosome I"/>
</dbReference>
<dbReference type="GO" id="GO:0008773">
    <property type="term" value="F:[protein-PII] uridylyltransferase activity"/>
    <property type="evidence" value="ECO:0007669"/>
    <property type="project" value="UniProtKB-UniRule"/>
</dbReference>
<dbReference type="GO" id="GO:0008081">
    <property type="term" value="F:phosphoric diester hydrolase activity"/>
    <property type="evidence" value="ECO:0007669"/>
    <property type="project" value="UniProtKB-UniRule"/>
</dbReference>
<dbReference type="GO" id="GO:0006808">
    <property type="term" value="P:regulation of nitrogen utilization"/>
    <property type="evidence" value="ECO:0007669"/>
    <property type="project" value="UniProtKB-UniRule"/>
</dbReference>
<dbReference type="CDD" id="cd04899">
    <property type="entry name" value="ACT_ACR-UUR-like_2"/>
    <property type="match status" value="1"/>
</dbReference>
<dbReference type="CDD" id="cd04900">
    <property type="entry name" value="ACT_UUR-like_1"/>
    <property type="match status" value="1"/>
</dbReference>
<dbReference type="CDD" id="cd00077">
    <property type="entry name" value="HDc"/>
    <property type="match status" value="1"/>
</dbReference>
<dbReference type="CDD" id="cd05401">
    <property type="entry name" value="NT_GlnE_GlnD_like"/>
    <property type="match status" value="1"/>
</dbReference>
<dbReference type="Gene3D" id="1.10.3210.10">
    <property type="entry name" value="Hypothetical protein af1432"/>
    <property type="match status" value="1"/>
</dbReference>
<dbReference type="HAMAP" id="MF_00277">
    <property type="entry name" value="PII_uridylyl_transf"/>
    <property type="match status" value="1"/>
</dbReference>
<dbReference type="InterPro" id="IPR045865">
    <property type="entry name" value="ACT-like_dom_sf"/>
</dbReference>
<dbReference type="InterPro" id="IPR002912">
    <property type="entry name" value="ACT_dom"/>
</dbReference>
<dbReference type="InterPro" id="IPR003607">
    <property type="entry name" value="HD/PDEase_dom"/>
</dbReference>
<dbReference type="InterPro" id="IPR006674">
    <property type="entry name" value="HD_domain"/>
</dbReference>
<dbReference type="InterPro" id="IPR043519">
    <property type="entry name" value="NT_sf"/>
</dbReference>
<dbReference type="InterPro" id="IPR013546">
    <property type="entry name" value="PII_UdlTrfase/GS_AdlTrfase"/>
</dbReference>
<dbReference type="InterPro" id="IPR002934">
    <property type="entry name" value="Polymerase_NTP_transf_dom"/>
</dbReference>
<dbReference type="InterPro" id="IPR010043">
    <property type="entry name" value="UTase/UR"/>
</dbReference>
<dbReference type="NCBIfam" id="NF002487">
    <property type="entry name" value="PRK01759.1"/>
    <property type="match status" value="1"/>
</dbReference>
<dbReference type="NCBIfam" id="NF003448">
    <property type="entry name" value="PRK05007.1"/>
    <property type="match status" value="1"/>
</dbReference>
<dbReference type="NCBIfam" id="TIGR01693">
    <property type="entry name" value="UTase_glnD"/>
    <property type="match status" value="1"/>
</dbReference>
<dbReference type="PANTHER" id="PTHR47320">
    <property type="entry name" value="BIFUNCTIONAL URIDYLYLTRANSFERASE/URIDYLYL-REMOVING ENZYME"/>
    <property type="match status" value="1"/>
</dbReference>
<dbReference type="PANTHER" id="PTHR47320:SF1">
    <property type="entry name" value="BIFUNCTIONAL URIDYLYLTRANSFERASE_URIDYLYL-REMOVING ENZYME"/>
    <property type="match status" value="1"/>
</dbReference>
<dbReference type="Pfam" id="PF01842">
    <property type="entry name" value="ACT"/>
    <property type="match status" value="1"/>
</dbReference>
<dbReference type="Pfam" id="PF08335">
    <property type="entry name" value="GlnD_UR_UTase"/>
    <property type="match status" value="1"/>
</dbReference>
<dbReference type="Pfam" id="PF01966">
    <property type="entry name" value="HD"/>
    <property type="match status" value="1"/>
</dbReference>
<dbReference type="Pfam" id="PF01909">
    <property type="entry name" value="NTP_transf_2"/>
    <property type="match status" value="1"/>
</dbReference>
<dbReference type="PIRSF" id="PIRSF006288">
    <property type="entry name" value="PII_uridyltransf"/>
    <property type="match status" value="1"/>
</dbReference>
<dbReference type="SMART" id="SM00471">
    <property type="entry name" value="HDc"/>
    <property type="match status" value="1"/>
</dbReference>
<dbReference type="SUPFAM" id="SSF55021">
    <property type="entry name" value="ACT-like"/>
    <property type="match status" value="2"/>
</dbReference>
<dbReference type="SUPFAM" id="SSF109604">
    <property type="entry name" value="HD-domain/PDEase-like"/>
    <property type="match status" value="1"/>
</dbReference>
<dbReference type="SUPFAM" id="SSF81301">
    <property type="entry name" value="Nucleotidyltransferase"/>
    <property type="match status" value="1"/>
</dbReference>
<dbReference type="SUPFAM" id="SSF81593">
    <property type="entry name" value="Nucleotidyltransferase substrate binding subunit/domain"/>
    <property type="match status" value="1"/>
</dbReference>
<dbReference type="PROSITE" id="PS51671">
    <property type="entry name" value="ACT"/>
    <property type="match status" value="2"/>
</dbReference>
<dbReference type="PROSITE" id="PS51831">
    <property type="entry name" value="HD"/>
    <property type="match status" value="1"/>
</dbReference>
<evidence type="ECO:0000255" key="1">
    <source>
        <dbReference type="HAMAP-Rule" id="MF_00277"/>
    </source>
</evidence>
<evidence type="ECO:0000255" key="2">
    <source>
        <dbReference type="PROSITE-ProRule" id="PRU01175"/>
    </source>
</evidence>
<organism>
    <name type="scientific">Aliivibrio fischeri (strain ATCC 700601 / ES114)</name>
    <name type="common">Vibrio fischeri</name>
    <dbReference type="NCBI Taxonomy" id="312309"/>
    <lineage>
        <taxon>Bacteria</taxon>
        <taxon>Pseudomonadati</taxon>
        <taxon>Pseudomonadota</taxon>
        <taxon>Gammaproteobacteria</taxon>
        <taxon>Vibrionales</taxon>
        <taxon>Vibrionaceae</taxon>
        <taxon>Aliivibrio</taxon>
    </lineage>
</organism>
<keyword id="KW-0378">Hydrolase</keyword>
<keyword id="KW-0460">Magnesium</keyword>
<keyword id="KW-0511">Multifunctional enzyme</keyword>
<keyword id="KW-0548">Nucleotidyltransferase</keyword>
<keyword id="KW-1185">Reference proteome</keyword>
<keyword id="KW-0677">Repeat</keyword>
<keyword id="KW-0808">Transferase</keyword>
<gene>
    <name evidence="1" type="primary">glnD</name>
    <name type="ordered locus">VF_1964</name>
</gene>
<accession>Q9XC07</accession>
<accession>Q5E3D7</accession>
<comment type="function">
    <text evidence="1">Modifies, by uridylylation and deuridylylation, the PII regulatory proteins (GlnB and homologs), in response to the nitrogen status of the cell that GlnD senses through the glutamine level. Under low glutamine levels, catalyzes the conversion of the PII proteins and UTP to PII-UMP and PPi, while under higher glutamine levels, GlnD hydrolyzes PII-UMP to PII and UMP (deuridylylation). Thus, controls uridylylation state and activity of the PII proteins, and plays an important role in the regulation of nitrogen assimilation and metabolism.</text>
</comment>
<comment type="catalytic activity">
    <reaction evidence="1">
        <text>[protein-PII]-L-tyrosine + UTP = [protein-PII]-uridylyl-L-tyrosine + diphosphate</text>
        <dbReference type="Rhea" id="RHEA:13673"/>
        <dbReference type="Rhea" id="RHEA-COMP:12147"/>
        <dbReference type="Rhea" id="RHEA-COMP:12148"/>
        <dbReference type="ChEBI" id="CHEBI:33019"/>
        <dbReference type="ChEBI" id="CHEBI:46398"/>
        <dbReference type="ChEBI" id="CHEBI:46858"/>
        <dbReference type="ChEBI" id="CHEBI:90602"/>
        <dbReference type="EC" id="2.7.7.59"/>
    </reaction>
</comment>
<comment type="catalytic activity">
    <reaction evidence="1">
        <text>[protein-PII]-uridylyl-L-tyrosine + H2O = [protein-PII]-L-tyrosine + UMP + H(+)</text>
        <dbReference type="Rhea" id="RHEA:48600"/>
        <dbReference type="Rhea" id="RHEA-COMP:12147"/>
        <dbReference type="Rhea" id="RHEA-COMP:12148"/>
        <dbReference type="ChEBI" id="CHEBI:15377"/>
        <dbReference type="ChEBI" id="CHEBI:15378"/>
        <dbReference type="ChEBI" id="CHEBI:46858"/>
        <dbReference type="ChEBI" id="CHEBI:57865"/>
        <dbReference type="ChEBI" id="CHEBI:90602"/>
    </reaction>
</comment>
<comment type="cofactor">
    <cofactor evidence="1">
        <name>Mg(2+)</name>
        <dbReference type="ChEBI" id="CHEBI:18420"/>
    </cofactor>
</comment>
<comment type="activity regulation">
    <text evidence="1">Uridylyltransferase (UTase) activity is inhibited by glutamine, while glutamine activates uridylyl-removing (UR) activity.</text>
</comment>
<comment type="domain">
    <text evidence="1">Has four distinct domains: an N-terminal nucleotidyltransferase (NT) domain responsible for UTase activity, a central HD domain that encodes UR activity, and two C-terminal ACT domains that seem to have a role in glutamine sensing.</text>
</comment>
<comment type="similarity">
    <text evidence="1">Belongs to the GlnD family.</text>
</comment>